<protein>
    <recommendedName>
        <fullName evidence="7">Galactoside 2-alpha-L-fucosyltransferase</fullName>
        <ecNumber evidence="3">2.4.1.-</ecNumber>
    </recommendedName>
    <alternativeName>
        <fullName evidence="4">Alpha-(1,2)-L-fucosyltransferase</fullName>
    </alternativeName>
    <alternativeName>
        <fullName evidence="4">CE2FT-2</fullName>
    </alternativeName>
</protein>
<keyword id="KW-0325">Glycoprotein</keyword>
<keyword id="KW-0328">Glycosyltransferase</keyword>
<keyword id="KW-0333">Golgi apparatus</keyword>
<keyword id="KW-0472">Membrane</keyword>
<keyword id="KW-1185">Reference proteome</keyword>
<keyword id="KW-0735">Signal-anchor</keyword>
<keyword id="KW-0808">Transferase</keyword>
<keyword id="KW-0812">Transmembrane</keyword>
<keyword id="KW-1133">Transmembrane helix</keyword>
<feature type="chain" id="PRO_0000438177" description="Galactoside 2-alpha-L-fucosyltransferase">
    <location>
        <begin position="1"/>
        <end position="402"/>
    </location>
</feature>
<feature type="topological domain" description="Cytoplasmic" evidence="5">
    <location>
        <begin position="1"/>
        <end position="6"/>
    </location>
</feature>
<feature type="transmembrane region" description="Helical; Signal-anchor for type II membrane protein" evidence="1">
    <location>
        <begin position="7"/>
        <end position="27"/>
    </location>
</feature>
<feature type="topological domain" description="Lumenal" evidence="5">
    <location>
        <begin position="28"/>
        <end position="402"/>
    </location>
</feature>
<feature type="glycosylation site" description="N-linked (GlcNAc...) asparagine" evidence="2">
    <location>
        <position position="119"/>
    </location>
</feature>
<feature type="glycosylation site" description="N-linked (GlcNAc...) asparagine" evidence="2">
    <location>
        <position position="175"/>
    </location>
</feature>
<feature type="glycosylation site" description="N-linked (GlcNAc...) asparagine" evidence="2">
    <location>
        <position position="301"/>
    </location>
</feature>
<dbReference type="EC" id="2.4.1.-" evidence="3"/>
<dbReference type="EMBL" id="EF015633">
    <property type="protein sequence ID" value="ABK20307.1"/>
    <property type="molecule type" value="mRNA"/>
</dbReference>
<dbReference type="EMBL" id="BX284601">
    <property type="protein sequence ID" value="CAB16868.1"/>
    <property type="molecule type" value="Genomic_DNA"/>
</dbReference>
<dbReference type="EMBL" id="BX284601">
    <property type="protein sequence ID" value="CAN99658.1"/>
    <property type="molecule type" value="Genomic_DNA"/>
</dbReference>
<dbReference type="PIR" id="T20572">
    <property type="entry name" value="T20572"/>
</dbReference>
<dbReference type="RefSeq" id="NP_493265.1">
    <property type="nucleotide sequence ID" value="NM_060864.1"/>
</dbReference>
<dbReference type="FunCoup" id="A5Z2X3">
    <property type="interactions" value="1"/>
</dbReference>
<dbReference type="STRING" id="6239.F08A8.5b.1"/>
<dbReference type="CAZy" id="GT11">
    <property type="family name" value="Glycosyltransferase Family 11"/>
</dbReference>
<dbReference type="PaxDb" id="6239-F08A8.5b"/>
<dbReference type="GeneID" id="184168"/>
<dbReference type="KEGG" id="cel:CELE_F08A8.5"/>
<dbReference type="AGR" id="WB:WBGene00008568"/>
<dbReference type="CTD" id="184168"/>
<dbReference type="WormBase" id="F08A8.5">
    <property type="protein sequence ID" value="CE41218"/>
    <property type="gene ID" value="WBGene00008568"/>
</dbReference>
<dbReference type="eggNOG" id="ENOG502T8JY">
    <property type="taxonomic scope" value="Eukaryota"/>
</dbReference>
<dbReference type="GeneTree" id="ENSGT00530000064380"/>
<dbReference type="InParanoid" id="A5Z2X3"/>
<dbReference type="OMA" id="PEWIKLK"/>
<dbReference type="OrthoDB" id="5815225at2759"/>
<dbReference type="PhylomeDB" id="A5Z2X3"/>
<dbReference type="SABIO-RK" id="A5Z2X3"/>
<dbReference type="UniPathway" id="UPA00378"/>
<dbReference type="PRO" id="PR:A5Z2X3"/>
<dbReference type="Proteomes" id="UP000001940">
    <property type="component" value="Chromosome I"/>
</dbReference>
<dbReference type="Bgee" id="WBGene00008568">
    <property type="expression patterns" value="Expressed in pharyngeal muscle cell (C elegans) and 2 other cell types or tissues"/>
</dbReference>
<dbReference type="GO" id="GO:0032580">
    <property type="term" value="C:Golgi cisterna membrane"/>
    <property type="evidence" value="ECO:0007669"/>
    <property type="project" value="UniProtKB-SubCell"/>
</dbReference>
<dbReference type="GO" id="GO:0016757">
    <property type="term" value="F:glycosyltransferase activity"/>
    <property type="evidence" value="ECO:0007669"/>
    <property type="project" value="UniProtKB-KW"/>
</dbReference>
<dbReference type="GO" id="GO:0043413">
    <property type="term" value="P:macromolecule glycosylation"/>
    <property type="evidence" value="ECO:0000318"/>
    <property type="project" value="GO_Central"/>
</dbReference>
<dbReference type="GO" id="GO:0006486">
    <property type="term" value="P:protein glycosylation"/>
    <property type="evidence" value="ECO:0007669"/>
    <property type="project" value="UniProtKB-UniPathway"/>
</dbReference>
<dbReference type="CDD" id="cd11301">
    <property type="entry name" value="Fut1_Fut2_like"/>
    <property type="match status" value="1"/>
</dbReference>
<dbReference type="InterPro" id="IPR052501">
    <property type="entry name" value="Alpha-1-2_FucT"/>
</dbReference>
<dbReference type="PANTHER" id="PTHR22898:SF2">
    <property type="entry name" value="GALACTOSIDE 2-ALPHA-L-FUCOSYLTRANSFERASE-RELATED"/>
    <property type="match status" value="1"/>
</dbReference>
<dbReference type="PANTHER" id="PTHR22898">
    <property type="entry name" value="UNCHARACTERIZED GLYCOSOL TRANSFERASE-RELATED"/>
    <property type="match status" value="1"/>
</dbReference>
<gene>
    <name evidence="9" type="ORF">F08A8.5</name>
</gene>
<proteinExistence type="evidence at protein level"/>
<evidence type="ECO:0000255" key="1"/>
<evidence type="ECO:0000255" key="2">
    <source>
        <dbReference type="PROSITE-ProRule" id="PRU00498"/>
    </source>
</evidence>
<evidence type="ECO:0000269" key="3">
    <source>
    </source>
</evidence>
<evidence type="ECO:0000303" key="4">
    <source>
    </source>
</evidence>
<evidence type="ECO:0000305" key="5"/>
<evidence type="ECO:0000312" key="6">
    <source>
        <dbReference type="EMBL" id="ABK20307.1"/>
    </source>
</evidence>
<evidence type="ECO:0000312" key="7">
    <source>
        <dbReference type="EMBL" id="CAN99658.1"/>
    </source>
</evidence>
<evidence type="ECO:0000312" key="8">
    <source>
        <dbReference type="Proteomes" id="UP000001940"/>
    </source>
</evidence>
<evidence type="ECO:0000312" key="9">
    <source>
        <dbReference type="WormBase" id="F08A8.5"/>
    </source>
</evidence>
<sequence>MRYNSNYLMYFCLVLGIFANIYVIIKITLGSSHILEYFQKNSNLSPKCEINVNNLLSFIENRHFLDLEQKNSQKSQPNYEKTLQLMLFAFPSGGLGNKLFEIISLHGIATSLQRKAVINATNPSFIETLNRNIQPLFPKLADQFTLRIIPDSLVTHQQTNWGRCCVYDDPSRFLNRSDQNLILDGHYFQSFKYFHHIRPQVREWLAPSKLQAMRAEILLPAKFRDDFLICTHVRRGDFQYDGLHRPSDATFTRAATDFLVDLYRKSHERVNVVVLGNDIHFAYTVFEDRVAHFTFLQKPVNNSYDYSLPQISPSYTAILTPTLTPEIDLAFSRLFCDVTLITAPSSTFGWWLSYLAKRTATTYYRDILESKDGVAGEMHPEDFYPPEWIKLKTDLNGKISKY</sequence>
<organism evidence="8">
    <name type="scientific">Caenorhabditis elegans</name>
    <dbReference type="NCBI Taxonomy" id="6239"/>
    <lineage>
        <taxon>Eukaryota</taxon>
        <taxon>Metazoa</taxon>
        <taxon>Ecdysozoa</taxon>
        <taxon>Nematoda</taxon>
        <taxon>Chromadorea</taxon>
        <taxon>Rhabditida</taxon>
        <taxon>Rhabditina</taxon>
        <taxon>Rhabditomorpha</taxon>
        <taxon>Rhabditoidea</taxon>
        <taxon>Rhabditidae</taxon>
        <taxon>Peloderinae</taxon>
        <taxon>Caenorhabditis</taxon>
    </lineage>
</organism>
<name>FUTB2_CAEEL</name>
<accession>A5Z2X3</accession>
<accession>G5EFK3</accession>
<reference evidence="6" key="1">
    <citation type="journal article" date="2008" name="Glycobiology">
        <title>A novel alpha1,2-fucosyltransferase (CE2FT-2) in Caenorhabditis elegans generates H-type 3 glycan structures.</title>
        <authorList>
            <person name="Zheng Q."/>
            <person name="Van Die I."/>
            <person name="Cummings R.D."/>
        </authorList>
    </citation>
    <scope>NUCLEOTIDE SEQUENCE [MRNA]</scope>
    <scope>FUNCTION</scope>
    <scope>CATALYTIC ACTIVITY</scope>
    <scope>BIOPHYSICOCHEMICAL PROPERTIES</scope>
    <scope>SUBUNIT</scope>
    <scope>TISSUE SPECIFICITY</scope>
    <scope>DEVELOPMENTAL STAGE</scope>
    <scope>GLYCOSYLATION</scope>
</reference>
<reference evidence="8" key="2">
    <citation type="journal article" date="1998" name="Science">
        <title>Genome sequence of the nematode C. elegans: a platform for investigating biology.</title>
        <authorList>
            <consortium name="The C. elegans sequencing consortium"/>
        </authorList>
    </citation>
    <scope>NUCLEOTIDE SEQUENCE [LARGE SCALE GENOMIC DNA]</scope>
    <source>
        <strain evidence="8">Bristol N2</strain>
    </source>
</reference>
<comment type="function">
    <text evidence="3">Selectively catalyzes the addition of fucose in alpha 1-2 linkage to Gal-beta-(1-&gt;3)-GalNAc-alpha-R, Gal-beta-(1-&gt;3)-(GlcNAc-beta-(1-&gt;6))-GalNAc-alpha-R and Gal-beta-(1-&gt;3)-GalNAc acceptors but not Gal-beta-(1-&gt;3)-GlcNAc-beta-(1-&gt;3)-Gal-beta-(1-&gt;4)-Glc in vitro.</text>
</comment>
<comment type="biophysicochemical properties">
    <kinetics>
        <KM evidence="3">0.61 mM for Gal-beta-1-3GalNAc-alpha-O-pNP at 25 degrees Celsius</KM>
    </kinetics>
</comment>
<comment type="pathway">
    <text evidence="5">Protein modification; protein glycosylation.</text>
</comment>
<comment type="subunit">
    <text evidence="3">May form oligomers.</text>
</comment>
<comment type="subcellular location">
    <subcellularLocation>
        <location evidence="5">Golgi apparatus</location>
        <location evidence="5">Golgi stack membrane</location>
        <topology evidence="5">Single-pass type II membrane protein</topology>
    </subcellularLocation>
</comment>
<comment type="tissue specificity">
    <text evidence="3">Expression is restricted to pharyngeal neurons and gland cells.</text>
</comment>
<comment type="developmental stage">
    <text evidence="3">Expressed throughout development and in adult.</text>
</comment>
<comment type="PTM">
    <text evidence="3">N-glycosylated.</text>
</comment>
<comment type="similarity">
    <text evidence="5">Belongs to the glycosyltransferase 11 family.</text>
</comment>